<organism>
    <name type="scientific">Pyropia haitanensis</name>
    <name type="common">Red seaweed</name>
    <name type="synonym">Porphyra haitanensis</name>
    <dbReference type="NCBI Taxonomy" id="1262161"/>
    <lineage>
        <taxon>Eukaryota</taxon>
        <taxon>Rhodophyta</taxon>
        <taxon>Bangiophyceae</taxon>
        <taxon>Bangiales</taxon>
        <taxon>Bangiaceae</taxon>
        <taxon>Pyropia</taxon>
    </lineage>
</organism>
<accession>Q760R5</accession>
<gene>
    <name type="primary">rbcL</name>
</gene>
<keyword id="KW-0113">Calvin cycle</keyword>
<keyword id="KW-0120">Carbon dioxide fixation</keyword>
<keyword id="KW-0150">Chloroplast</keyword>
<keyword id="KW-0456">Lyase</keyword>
<keyword id="KW-0460">Magnesium</keyword>
<keyword id="KW-0479">Metal-binding</keyword>
<keyword id="KW-0503">Monooxygenase</keyword>
<keyword id="KW-0560">Oxidoreductase</keyword>
<keyword id="KW-0601">Photorespiration</keyword>
<keyword id="KW-0602">Photosynthesis</keyword>
<keyword id="KW-0934">Plastid</keyword>
<reference key="1">
    <citation type="submission" date="2003-08" db="EMBL/GenBank/DDBJ databases">
        <title>Species determination utilizing Porphyra (Rhodophyta) plastid DNA RuBisCo sequences.</title>
        <authorList>
            <person name="Kito H."/>
            <person name="Kunimoto M."/>
            <person name="Mizukami Y."/>
            <person name="Murase N."/>
            <person name="Kuroki T."/>
            <person name="Taruta M."/>
            <person name="Levine I."/>
        </authorList>
    </citation>
    <scope>NUCLEOTIDE SEQUENCE [GENOMIC DNA]</scope>
    <source>
        <tissue>Thallus</tissue>
    </source>
</reference>
<sequence length="488" mass="54030">MSQSVESRTRIKSERYESGVIPYAKMGYWDADYVIKETDVLALFRITPQPGVDPIEASAAIAGESSTATWTVVWTDLLTACDLYRAKAYRVDPVPNVADQYFAYIAYDIDLFEEGSIANLTASIIGNVFGFKAVKALRLEDMRMPVAYLKTFQGPATGLIVERERMDKFGRPFLGATVKPKLGLSGKNYGRVVYEGLKGGLDFLKDDENINSQPFMRWKERFLYSMEGVNKASAAAGEIKGHYLNVTAATMEDMYERAEFSKEVGSIICMIDLVIGYTAIQTMAIWARKHDMILHLHRAGNSTYSRQKNHGMNFRVICKWMRMAGVDHIHAGTVVGKLEGDPLMIKGFYNTLLESETDINLPQGLFFAQNWASLRKVVPVASGGIHAGQMHQLLDYLGDDVVLQFGGGTIGHPDGIQAGATANRVALESMVMARNEGRNYVAEGPQILRDAAKTCGPLQTALDLWKDISFNYTSTDTADFVETPTANI</sequence>
<comment type="function">
    <text evidence="1">RuBisCO catalyzes two reactions: the carboxylation of D-ribulose 1,5-bisphosphate, the primary event in carbon dioxide fixation, as well as the oxidative fragmentation of the pentose substrate in the photorespiration process. Both reactions occur simultaneously and in competition at the same active site (By similarity).</text>
</comment>
<comment type="catalytic activity">
    <reaction>
        <text>2 (2R)-3-phosphoglycerate + 2 H(+) = D-ribulose 1,5-bisphosphate + CO2 + H2O</text>
        <dbReference type="Rhea" id="RHEA:23124"/>
        <dbReference type="ChEBI" id="CHEBI:15377"/>
        <dbReference type="ChEBI" id="CHEBI:15378"/>
        <dbReference type="ChEBI" id="CHEBI:16526"/>
        <dbReference type="ChEBI" id="CHEBI:57870"/>
        <dbReference type="ChEBI" id="CHEBI:58272"/>
        <dbReference type="EC" id="4.1.1.39"/>
    </reaction>
</comment>
<comment type="catalytic activity">
    <reaction>
        <text>D-ribulose 1,5-bisphosphate + O2 = 2-phosphoglycolate + (2R)-3-phosphoglycerate + 2 H(+)</text>
        <dbReference type="Rhea" id="RHEA:36631"/>
        <dbReference type="ChEBI" id="CHEBI:15378"/>
        <dbReference type="ChEBI" id="CHEBI:15379"/>
        <dbReference type="ChEBI" id="CHEBI:57870"/>
        <dbReference type="ChEBI" id="CHEBI:58033"/>
        <dbReference type="ChEBI" id="CHEBI:58272"/>
    </reaction>
</comment>
<comment type="cofactor">
    <cofactor evidence="1">
        <name>Mg(2+)</name>
        <dbReference type="ChEBI" id="CHEBI:18420"/>
    </cofactor>
    <text evidence="1">Binds 1 Mg(2+) ion per subunit.</text>
</comment>
<comment type="subunit">
    <text evidence="1">Heterohexadecamer of 8 large chains and 8 small chains.</text>
</comment>
<comment type="subcellular location">
    <subcellularLocation>
        <location>Plastid</location>
        <location>Chloroplast</location>
    </subcellularLocation>
</comment>
<comment type="miscellaneous">
    <text evidence="1">The basic functional RuBisCO is composed of a large chain homodimer in a 'head-to-tail' conformation. In form I RuBisCO this homodimer is arranged in a barrel-like tetramer with the small subunits forming a tetrameric 'cap' on each end of the 'barrel' (By similarity).</text>
</comment>
<comment type="similarity">
    <text evidence="2">Belongs to the RuBisCO large chain family. Type I subfamily.</text>
</comment>
<geneLocation type="chloroplast"/>
<feature type="chain" id="PRO_0000277257" description="Ribulose bisphosphate carboxylase large chain">
    <location>
        <begin position="1"/>
        <end position="488"/>
    </location>
</feature>
<feature type="active site" description="Proton acceptor" evidence="1">
    <location>
        <position position="179"/>
    </location>
</feature>
<feature type="active site" description="Proton acceptor" evidence="1">
    <location>
        <position position="297"/>
    </location>
</feature>
<feature type="binding site" description="in homodimeric partner" evidence="1">
    <location>
        <position position="127"/>
    </location>
    <ligand>
        <name>substrate</name>
    </ligand>
</feature>
<feature type="binding site" evidence="1">
    <location>
        <position position="177"/>
    </location>
    <ligand>
        <name>substrate</name>
    </ligand>
</feature>
<feature type="binding site" evidence="1">
    <location>
        <position position="181"/>
    </location>
    <ligand>
        <name>substrate</name>
    </ligand>
</feature>
<feature type="binding site" description="via carbamate group" evidence="1">
    <location>
        <position position="205"/>
    </location>
    <ligand>
        <name>Mg(2+)</name>
        <dbReference type="ChEBI" id="CHEBI:18420"/>
    </ligand>
</feature>
<feature type="binding site" evidence="1">
    <location>
        <position position="207"/>
    </location>
    <ligand>
        <name>Mg(2+)</name>
        <dbReference type="ChEBI" id="CHEBI:18420"/>
    </ligand>
</feature>
<feature type="binding site" evidence="1">
    <location>
        <position position="208"/>
    </location>
    <ligand>
        <name>Mg(2+)</name>
        <dbReference type="ChEBI" id="CHEBI:18420"/>
    </ligand>
</feature>
<feature type="binding site" evidence="1">
    <location>
        <position position="298"/>
    </location>
    <ligand>
        <name>substrate</name>
    </ligand>
</feature>
<feature type="binding site" evidence="1">
    <location>
        <position position="330"/>
    </location>
    <ligand>
        <name>substrate</name>
    </ligand>
</feature>
<feature type="binding site" evidence="1">
    <location>
        <position position="382"/>
    </location>
    <ligand>
        <name>substrate</name>
    </ligand>
</feature>
<feature type="site" description="Transition state stabilizer" evidence="1">
    <location>
        <position position="337"/>
    </location>
</feature>
<feature type="modified residue" description="N6-carboxylysine" evidence="1">
    <location>
        <position position="205"/>
    </location>
</feature>
<protein>
    <recommendedName>
        <fullName>Ribulose bisphosphate carboxylase large chain</fullName>
        <shortName>RuBisCO large subunit</shortName>
        <ecNumber>4.1.1.39</ecNumber>
    </recommendedName>
</protein>
<dbReference type="EC" id="4.1.1.39"/>
<dbReference type="EMBL" id="AB118585">
    <property type="protein sequence ID" value="BAC84937.1"/>
    <property type="molecule type" value="Genomic_DNA"/>
</dbReference>
<dbReference type="RefSeq" id="YP_007947755.1">
    <property type="nucleotide sequence ID" value="NC_021189.1"/>
</dbReference>
<dbReference type="SMR" id="Q760R5"/>
<dbReference type="GeneID" id="15525243"/>
<dbReference type="GO" id="GO:0009507">
    <property type="term" value="C:chloroplast"/>
    <property type="evidence" value="ECO:0007669"/>
    <property type="project" value="UniProtKB-SubCell"/>
</dbReference>
<dbReference type="GO" id="GO:0000287">
    <property type="term" value="F:magnesium ion binding"/>
    <property type="evidence" value="ECO:0007669"/>
    <property type="project" value="UniProtKB-UniRule"/>
</dbReference>
<dbReference type="GO" id="GO:0004497">
    <property type="term" value="F:monooxygenase activity"/>
    <property type="evidence" value="ECO:0007669"/>
    <property type="project" value="UniProtKB-KW"/>
</dbReference>
<dbReference type="GO" id="GO:0016984">
    <property type="term" value="F:ribulose-bisphosphate carboxylase activity"/>
    <property type="evidence" value="ECO:0007669"/>
    <property type="project" value="UniProtKB-UniRule"/>
</dbReference>
<dbReference type="GO" id="GO:0019253">
    <property type="term" value="P:reductive pentose-phosphate cycle"/>
    <property type="evidence" value="ECO:0007669"/>
    <property type="project" value="UniProtKB-UniRule"/>
</dbReference>
<dbReference type="CDD" id="cd08212">
    <property type="entry name" value="RuBisCO_large_I"/>
    <property type="match status" value="1"/>
</dbReference>
<dbReference type="Gene3D" id="3.20.20.110">
    <property type="entry name" value="Ribulose bisphosphate carboxylase, large subunit, C-terminal domain"/>
    <property type="match status" value="1"/>
</dbReference>
<dbReference type="Gene3D" id="3.30.70.150">
    <property type="entry name" value="RuBisCO large subunit, N-terminal domain"/>
    <property type="match status" value="1"/>
</dbReference>
<dbReference type="HAMAP" id="MF_01338">
    <property type="entry name" value="RuBisCO_L_type1"/>
    <property type="match status" value="1"/>
</dbReference>
<dbReference type="InterPro" id="IPR033966">
    <property type="entry name" value="RuBisCO"/>
</dbReference>
<dbReference type="InterPro" id="IPR020878">
    <property type="entry name" value="RuBisCo_large_chain_AS"/>
</dbReference>
<dbReference type="InterPro" id="IPR000685">
    <property type="entry name" value="RuBisCO_lsu_C"/>
</dbReference>
<dbReference type="InterPro" id="IPR036376">
    <property type="entry name" value="RuBisCO_lsu_C_sf"/>
</dbReference>
<dbReference type="InterPro" id="IPR017443">
    <property type="entry name" value="RuBisCO_lsu_fd_N"/>
</dbReference>
<dbReference type="InterPro" id="IPR036422">
    <property type="entry name" value="RuBisCO_lsu_N_sf"/>
</dbReference>
<dbReference type="InterPro" id="IPR020888">
    <property type="entry name" value="RuBisCO_lsuI"/>
</dbReference>
<dbReference type="NCBIfam" id="NF003252">
    <property type="entry name" value="PRK04208.1"/>
    <property type="match status" value="1"/>
</dbReference>
<dbReference type="PANTHER" id="PTHR42704">
    <property type="entry name" value="RIBULOSE BISPHOSPHATE CARBOXYLASE"/>
    <property type="match status" value="1"/>
</dbReference>
<dbReference type="PANTHER" id="PTHR42704:SF17">
    <property type="entry name" value="RIBULOSE BISPHOSPHATE CARBOXYLASE LARGE CHAIN"/>
    <property type="match status" value="1"/>
</dbReference>
<dbReference type="Pfam" id="PF00016">
    <property type="entry name" value="RuBisCO_large"/>
    <property type="match status" value="1"/>
</dbReference>
<dbReference type="Pfam" id="PF02788">
    <property type="entry name" value="RuBisCO_large_N"/>
    <property type="match status" value="1"/>
</dbReference>
<dbReference type="SFLD" id="SFLDG01052">
    <property type="entry name" value="RuBisCO"/>
    <property type="match status" value="1"/>
</dbReference>
<dbReference type="SFLD" id="SFLDS00014">
    <property type="entry name" value="RuBisCO"/>
    <property type="match status" value="1"/>
</dbReference>
<dbReference type="SFLD" id="SFLDG00301">
    <property type="entry name" value="RuBisCO-like_proteins"/>
    <property type="match status" value="1"/>
</dbReference>
<dbReference type="SUPFAM" id="SSF51649">
    <property type="entry name" value="RuBisCo, C-terminal domain"/>
    <property type="match status" value="1"/>
</dbReference>
<dbReference type="SUPFAM" id="SSF54966">
    <property type="entry name" value="RuBisCO, large subunit, small (N-terminal) domain"/>
    <property type="match status" value="1"/>
</dbReference>
<dbReference type="PROSITE" id="PS00157">
    <property type="entry name" value="RUBISCO_LARGE"/>
    <property type="match status" value="1"/>
</dbReference>
<proteinExistence type="inferred from homology"/>
<name>RBL_PYRHA</name>
<evidence type="ECO:0000250" key="1"/>
<evidence type="ECO:0000305" key="2"/>